<protein>
    <recommendedName>
        <fullName evidence="1">Elongation factor 4</fullName>
        <shortName evidence="1">EF-4</shortName>
        <ecNumber evidence="1">3.6.5.n1</ecNumber>
    </recommendedName>
    <alternativeName>
        <fullName evidence="1">Ribosomal back-translocase LepA</fullName>
    </alternativeName>
</protein>
<keyword id="KW-0997">Cell inner membrane</keyword>
<keyword id="KW-1003">Cell membrane</keyword>
<keyword id="KW-0342">GTP-binding</keyword>
<keyword id="KW-0378">Hydrolase</keyword>
<keyword id="KW-0472">Membrane</keyword>
<keyword id="KW-0547">Nucleotide-binding</keyword>
<keyword id="KW-0648">Protein biosynthesis</keyword>
<keyword id="KW-1185">Reference proteome</keyword>
<proteinExistence type="inferred from homology"/>
<organism>
    <name type="scientific">Nitratidesulfovibrio vulgaris (strain ATCC 29579 / DSM 644 / CCUG 34227 / NCIMB 8303 / VKM B-1760 / Hildenborough)</name>
    <name type="common">Desulfovibrio vulgaris</name>
    <dbReference type="NCBI Taxonomy" id="882"/>
    <lineage>
        <taxon>Bacteria</taxon>
        <taxon>Pseudomonadati</taxon>
        <taxon>Thermodesulfobacteriota</taxon>
        <taxon>Desulfovibrionia</taxon>
        <taxon>Desulfovibrionales</taxon>
        <taxon>Desulfovibrionaceae</taxon>
        <taxon>Nitratidesulfovibrio</taxon>
    </lineage>
</organism>
<sequence length="601" mass="67215">MPRQEHIRNFSIIAHIDHGKSTLADRILEVTGLVSDREKRDQYLDRMDLERERGITIKAQTVRIPFTSKTGRKYILNLIDTPGHVDFNYEVSRSLAACDGALLVVDASQGVEAQTLANVYLALDHDHDIIPVLNKIDLPSSDVDRVKAEIEESIGLDCTDAIAVSAKTGMNVDKVLEAIVERLPAPEGNLNAPLKALIFDSWYDSYQGVVVLFRVMDGVLRKGDRVRMFATEKSYEVIRLGVFSPDIVDVAELGAGEVGFLCANIKELGDAKVGDTITHTDRPASEPVPGFKEVQPMVFCGLYPTDAAEYEPLKASLEKLQLNDAAFSYEPETSQALGFGFRCGFLGLLHMEIIQERLEREFQVDLIATAPSVIYKVETVDGKTQDIDNPSKLPDPTRITSLYEPYVRMDIHVPNEFVGNVLKLCEEKRGIQKNMGYIAANRVVITYELPFAEIVFDFFDRLKSGTKGYASMDYEPVDYRESSLVRLDILINGEAVDALAVIVHRDKAYHYGRALALKLKRTIPRQLFEVAIQAAIGQKVIARETISAMRKNVTAKCYGGDITRKRKLLEKQKEGKRRMKRMGNVELPQEAFLAALQVGDE</sequence>
<evidence type="ECO:0000255" key="1">
    <source>
        <dbReference type="HAMAP-Rule" id="MF_00071"/>
    </source>
</evidence>
<dbReference type="EC" id="3.6.5.n1" evidence="1"/>
<dbReference type="EMBL" id="AE017285">
    <property type="protein sequence ID" value="AAS95183.1"/>
    <property type="molecule type" value="Genomic_DNA"/>
</dbReference>
<dbReference type="RefSeq" id="WP_010938004.1">
    <property type="nucleotide sequence ID" value="NC_002937.3"/>
</dbReference>
<dbReference type="RefSeq" id="YP_009924.1">
    <property type="nucleotide sequence ID" value="NC_002937.3"/>
</dbReference>
<dbReference type="SMR" id="Q72E76"/>
<dbReference type="STRING" id="882.DVU_0703"/>
<dbReference type="PaxDb" id="882-DVU_0703"/>
<dbReference type="EnsemblBacteria" id="AAS95183">
    <property type="protein sequence ID" value="AAS95183"/>
    <property type="gene ID" value="DVU_0703"/>
</dbReference>
<dbReference type="KEGG" id="dvu:DVU_0703"/>
<dbReference type="PATRIC" id="fig|882.5.peg.660"/>
<dbReference type="eggNOG" id="COG0481">
    <property type="taxonomic scope" value="Bacteria"/>
</dbReference>
<dbReference type="HOGENOM" id="CLU_009995_3_3_7"/>
<dbReference type="OrthoDB" id="9801472at2"/>
<dbReference type="PhylomeDB" id="Q72E76"/>
<dbReference type="Proteomes" id="UP000002194">
    <property type="component" value="Chromosome"/>
</dbReference>
<dbReference type="GO" id="GO:0005886">
    <property type="term" value="C:plasma membrane"/>
    <property type="evidence" value="ECO:0007669"/>
    <property type="project" value="UniProtKB-SubCell"/>
</dbReference>
<dbReference type="GO" id="GO:0005525">
    <property type="term" value="F:GTP binding"/>
    <property type="evidence" value="ECO:0007669"/>
    <property type="project" value="UniProtKB-UniRule"/>
</dbReference>
<dbReference type="GO" id="GO:0003924">
    <property type="term" value="F:GTPase activity"/>
    <property type="evidence" value="ECO:0007669"/>
    <property type="project" value="UniProtKB-UniRule"/>
</dbReference>
<dbReference type="GO" id="GO:0043022">
    <property type="term" value="F:ribosome binding"/>
    <property type="evidence" value="ECO:0007669"/>
    <property type="project" value="UniProtKB-UniRule"/>
</dbReference>
<dbReference type="GO" id="GO:0003746">
    <property type="term" value="F:translation elongation factor activity"/>
    <property type="evidence" value="ECO:0007669"/>
    <property type="project" value="UniProtKB-UniRule"/>
</dbReference>
<dbReference type="GO" id="GO:0045727">
    <property type="term" value="P:positive regulation of translation"/>
    <property type="evidence" value="ECO:0007669"/>
    <property type="project" value="UniProtKB-UniRule"/>
</dbReference>
<dbReference type="CDD" id="cd03699">
    <property type="entry name" value="EF4_II"/>
    <property type="match status" value="1"/>
</dbReference>
<dbReference type="CDD" id="cd16260">
    <property type="entry name" value="EF4_III"/>
    <property type="match status" value="1"/>
</dbReference>
<dbReference type="CDD" id="cd01890">
    <property type="entry name" value="LepA"/>
    <property type="match status" value="1"/>
</dbReference>
<dbReference type="CDD" id="cd03709">
    <property type="entry name" value="lepA_C"/>
    <property type="match status" value="1"/>
</dbReference>
<dbReference type="FunFam" id="3.40.50.300:FF:000078">
    <property type="entry name" value="Elongation factor 4"/>
    <property type="match status" value="1"/>
</dbReference>
<dbReference type="FunFam" id="2.40.30.10:FF:000015">
    <property type="entry name" value="Translation factor GUF1, mitochondrial"/>
    <property type="match status" value="1"/>
</dbReference>
<dbReference type="FunFam" id="3.30.70.240:FF:000007">
    <property type="entry name" value="Translation factor GUF1, mitochondrial"/>
    <property type="match status" value="1"/>
</dbReference>
<dbReference type="FunFam" id="3.30.70.2570:FF:000001">
    <property type="entry name" value="Translation factor GUF1, mitochondrial"/>
    <property type="match status" value="1"/>
</dbReference>
<dbReference type="FunFam" id="3.30.70.870:FF:000004">
    <property type="entry name" value="Translation factor GUF1, mitochondrial"/>
    <property type="match status" value="1"/>
</dbReference>
<dbReference type="Gene3D" id="3.30.70.240">
    <property type="match status" value="1"/>
</dbReference>
<dbReference type="Gene3D" id="3.30.70.2570">
    <property type="entry name" value="Elongation factor 4, C-terminal domain"/>
    <property type="match status" value="1"/>
</dbReference>
<dbReference type="Gene3D" id="3.30.70.870">
    <property type="entry name" value="Elongation Factor G (Translational Gtpase), domain 3"/>
    <property type="match status" value="1"/>
</dbReference>
<dbReference type="Gene3D" id="3.40.50.300">
    <property type="entry name" value="P-loop containing nucleotide triphosphate hydrolases"/>
    <property type="match status" value="1"/>
</dbReference>
<dbReference type="Gene3D" id="2.40.30.10">
    <property type="entry name" value="Translation factors"/>
    <property type="match status" value="1"/>
</dbReference>
<dbReference type="HAMAP" id="MF_00071">
    <property type="entry name" value="LepA"/>
    <property type="match status" value="1"/>
</dbReference>
<dbReference type="InterPro" id="IPR006297">
    <property type="entry name" value="EF-4"/>
</dbReference>
<dbReference type="InterPro" id="IPR041095">
    <property type="entry name" value="EFG_II"/>
</dbReference>
<dbReference type="InterPro" id="IPR035647">
    <property type="entry name" value="EFG_III/V"/>
</dbReference>
<dbReference type="InterPro" id="IPR000640">
    <property type="entry name" value="EFG_V-like"/>
</dbReference>
<dbReference type="InterPro" id="IPR004161">
    <property type="entry name" value="EFTu-like_2"/>
</dbReference>
<dbReference type="InterPro" id="IPR031157">
    <property type="entry name" value="G_TR_CS"/>
</dbReference>
<dbReference type="InterPro" id="IPR038363">
    <property type="entry name" value="LepA_C_sf"/>
</dbReference>
<dbReference type="InterPro" id="IPR013842">
    <property type="entry name" value="LepA_CTD"/>
</dbReference>
<dbReference type="InterPro" id="IPR035654">
    <property type="entry name" value="LepA_IV"/>
</dbReference>
<dbReference type="InterPro" id="IPR027417">
    <property type="entry name" value="P-loop_NTPase"/>
</dbReference>
<dbReference type="InterPro" id="IPR005225">
    <property type="entry name" value="Small_GTP-bd"/>
</dbReference>
<dbReference type="InterPro" id="IPR000795">
    <property type="entry name" value="T_Tr_GTP-bd_dom"/>
</dbReference>
<dbReference type="InterPro" id="IPR009000">
    <property type="entry name" value="Transl_B-barrel_sf"/>
</dbReference>
<dbReference type="NCBIfam" id="TIGR01393">
    <property type="entry name" value="lepA"/>
    <property type="match status" value="1"/>
</dbReference>
<dbReference type="NCBIfam" id="TIGR00231">
    <property type="entry name" value="small_GTP"/>
    <property type="match status" value="1"/>
</dbReference>
<dbReference type="PANTHER" id="PTHR43512:SF4">
    <property type="entry name" value="TRANSLATION FACTOR GUF1 HOMOLOG, CHLOROPLASTIC"/>
    <property type="match status" value="1"/>
</dbReference>
<dbReference type="PANTHER" id="PTHR43512">
    <property type="entry name" value="TRANSLATION FACTOR GUF1-RELATED"/>
    <property type="match status" value="1"/>
</dbReference>
<dbReference type="Pfam" id="PF00679">
    <property type="entry name" value="EFG_C"/>
    <property type="match status" value="1"/>
</dbReference>
<dbReference type="Pfam" id="PF14492">
    <property type="entry name" value="EFG_III"/>
    <property type="match status" value="1"/>
</dbReference>
<dbReference type="Pfam" id="PF00009">
    <property type="entry name" value="GTP_EFTU"/>
    <property type="match status" value="1"/>
</dbReference>
<dbReference type="Pfam" id="PF03144">
    <property type="entry name" value="GTP_EFTU_D2"/>
    <property type="match status" value="1"/>
</dbReference>
<dbReference type="Pfam" id="PF06421">
    <property type="entry name" value="LepA_C"/>
    <property type="match status" value="1"/>
</dbReference>
<dbReference type="PRINTS" id="PR00315">
    <property type="entry name" value="ELONGATNFCT"/>
</dbReference>
<dbReference type="SMART" id="SM00838">
    <property type="entry name" value="EFG_C"/>
    <property type="match status" value="1"/>
</dbReference>
<dbReference type="SUPFAM" id="SSF54980">
    <property type="entry name" value="EF-G C-terminal domain-like"/>
    <property type="match status" value="2"/>
</dbReference>
<dbReference type="SUPFAM" id="SSF52540">
    <property type="entry name" value="P-loop containing nucleoside triphosphate hydrolases"/>
    <property type="match status" value="1"/>
</dbReference>
<dbReference type="SUPFAM" id="SSF50447">
    <property type="entry name" value="Translation proteins"/>
    <property type="match status" value="1"/>
</dbReference>
<dbReference type="PROSITE" id="PS00301">
    <property type="entry name" value="G_TR_1"/>
    <property type="match status" value="1"/>
</dbReference>
<dbReference type="PROSITE" id="PS51722">
    <property type="entry name" value="G_TR_2"/>
    <property type="match status" value="1"/>
</dbReference>
<accession>Q72E76</accession>
<name>LEPA_NITV2</name>
<gene>
    <name evidence="1" type="primary">lepA</name>
    <name type="ordered locus">DVU_0703</name>
</gene>
<feature type="chain" id="PRO_0000176270" description="Elongation factor 4">
    <location>
        <begin position="1"/>
        <end position="601"/>
    </location>
</feature>
<feature type="domain" description="tr-type G">
    <location>
        <begin position="5"/>
        <end position="187"/>
    </location>
</feature>
<feature type="binding site" evidence="1">
    <location>
        <begin position="17"/>
        <end position="22"/>
    </location>
    <ligand>
        <name>GTP</name>
        <dbReference type="ChEBI" id="CHEBI:37565"/>
    </ligand>
</feature>
<feature type="binding site" evidence="1">
    <location>
        <begin position="134"/>
        <end position="137"/>
    </location>
    <ligand>
        <name>GTP</name>
        <dbReference type="ChEBI" id="CHEBI:37565"/>
    </ligand>
</feature>
<reference key="1">
    <citation type="journal article" date="2004" name="Nat. Biotechnol.">
        <title>The genome sequence of the anaerobic, sulfate-reducing bacterium Desulfovibrio vulgaris Hildenborough.</title>
        <authorList>
            <person name="Heidelberg J.F."/>
            <person name="Seshadri R."/>
            <person name="Haveman S.A."/>
            <person name="Hemme C.L."/>
            <person name="Paulsen I.T."/>
            <person name="Kolonay J.F."/>
            <person name="Eisen J.A."/>
            <person name="Ward N.L."/>
            <person name="Methe B.A."/>
            <person name="Brinkac L.M."/>
            <person name="Daugherty S.C."/>
            <person name="DeBoy R.T."/>
            <person name="Dodson R.J."/>
            <person name="Durkin A.S."/>
            <person name="Madupu R."/>
            <person name="Nelson W.C."/>
            <person name="Sullivan S.A."/>
            <person name="Fouts D.E."/>
            <person name="Haft D.H."/>
            <person name="Selengut J."/>
            <person name="Peterson J.D."/>
            <person name="Davidsen T.M."/>
            <person name="Zafar N."/>
            <person name="Zhou L."/>
            <person name="Radune D."/>
            <person name="Dimitrov G."/>
            <person name="Hance M."/>
            <person name="Tran K."/>
            <person name="Khouri H.M."/>
            <person name="Gill J."/>
            <person name="Utterback T.R."/>
            <person name="Feldblyum T.V."/>
            <person name="Wall J.D."/>
            <person name="Voordouw G."/>
            <person name="Fraser C.M."/>
        </authorList>
    </citation>
    <scope>NUCLEOTIDE SEQUENCE [LARGE SCALE GENOMIC DNA]</scope>
    <source>
        <strain>ATCC 29579 / DSM 644 / CCUG 34227 / NCIMB 8303 / VKM B-1760 / Hildenborough</strain>
    </source>
</reference>
<comment type="function">
    <text evidence="1">Required for accurate and efficient protein synthesis under certain stress conditions. May act as a fidelity factor of the translation reaction, by catalyzing a one-codon backward translocation of tRNAs on improperly translocated ribosomes. Back-translocation proceeds from a post-translocation (POST) complex to a pre-translocation (PRE) complex, thus giving elongation factor G a second chance to translocate the tRNAs correctly. Binds to ribosomes in a GTP-dependent manner.</text>
</comment>
<comment type="catalytic activity">
    <reaction evidence="1">
        <text>GTP + H2O = GDP + phosphate + H(+)</text>
        <dbReference type="Rhea" id="RHEA:19669"/>
        <dbReference type="ChEBI" id="CHEBI:15377"/>
        <dbReference type="ChEBI" id="CHEBI:15378"/>
        <dbReference type="ChEBI" id="CHEBI:37565"/>
        <dbReference type="ChEBI" id="CHEBI:43474"/>
        <dbReference type="ChEBI" id="CHEBI:58189"/>
        <dbReference type="EC" id="3.6.5.n1"/>
    </reaction>
</comment>
<comment type="subcellular location">
    <subcellularLocation>
        <location evidence="1">Cell inner membrane</location>
        <topology evidence="1">Peripheral membrane protein</topology>
        <orientation evidence="1">Cytoplasmic side</orientation>
    </subcellularLocation>
</comment>
<comment type="similarity">
    <text evidence="1">Belongs to the TRAFAC class translation factor GTPase superfamily. Classic translation factor GTPase family. LepA subfamily.</text>
</comment>